<protein>
    <recommendedName>
        <fullName evidence="5">Xyloglucan O-acetyltransferase 4</fullName>
        <shortName evidence="5">PtrXGOAT4</shortName>
        <ecNumber evidence="4">2.3.1.-</ecNumber>
    </recommendedName>
</protein>
<dbReference type="EC" id="2.3.1.-" evidence="4"/>
<dbReference type="EMBL" id="MH568693">
    <property type="protein sequence ID" value="AXN57021.1"/>
    <property type="molecule type" value="mRNA"/>
</dbReference>
<dbReference type="EMBL" id="CM009306">
    <property type="protein sequence ID" value="PNS95700.1"/>
    <property type="molecule type" value="Genomic_DNA"/>
</dbReference>
<dbReference type="SMR" id="A0A2K1X4I9"/>
<dbReference type="FunCoup" id="A0A2K1X4I9">
    <property type="interactions" value="5"/>
</dbReference>
<dbReference type="GlyCosmos" id="A0A2K1X4I9">
    <property type="glycosylation" value="5 sites, No reported glycans"/>
</dbReference>
<dbReference type="EnsemblPlants" id="Potri.017G073700.1.v4.1">
    <property type="protein sequence ID" value="Potri.017G073700.1.v4.1"/>
    <property type="gene ID" value="Potri.017G073700.v4.1"/>
</dbReference>
<dbReference type="Gramene" id="Potri.017G073700.1.v4.1">
    <property type="protein sequence ID" value="Potri.017G073700.1.v4.1"/>
    <property type="gene ID" value="Potri.017G073700.v4.1"/>
</dbReference>
<dbReference type="InParanoid" id="A0A2K1X4I9"/>
<dbReference type="OMA" id="PCGRKTL"/>
<dbReference type="OrthoDB" id="630188at2759"/>
<dbReference type="Proteomes" id="UP000006729">
    <property type="component" value="Chromosome 17"/>
</dbReference>
<dbReference type="GO" id="GO:0005794">
    <property type="term" value="C:Golgi apparatus"/>
    <property type="evidence" value="ECO:0000318"/>
    <property type="project" value="GO_Central"/>
</dbReference>
<dbReference type="GO" id="GO:0000139">
    <property type="term" value="C:Golgi membrane"/>
    <property type="evidence" value="ECO:0007669"/>
    <property type="project" value="UniProtKB-SubCell"/>
</dbReference>
<dbReference type="GO" id="GO:0016413">
    <property type="term" value="F:O-acetyltransferase activity"/>
    <property type="evidence" value="ECO:0000318"/>
    <property type="project" value="GO_Central"/>
</dbReference>
<dbReference type="GO" id="GO:1990538">
    <property type="term" value="F:xylan O-acetyltransferase activity"/>
    <property type="evidence" value="ECO:0000314"/>
    <property type="project" value="UniProtKB"/>
</dbReference>
<dbReference type="GO" id="GO:1990937">
    <property type="term" value="P:xylan acetylation"/>
    <property type="evidence" value="ECO:0000314"/>
    <property type="project" value="UniProtKB"/>
</dbReference>
<dbReference type="InterPro" id="IPR029962">
    <property type="entry name" value="TBL"/>
</dbReference>
<dbReference type="InterPro" id="IPR026057">
    <property type="entry name" value="TBL_C"/>
</dbReference>
<dbReference type="InterPro" id="IPR025846">
    <property type="entry name" value="TBL_N"/>
</dbReference>
<dbReference type="PANTHER" id="PTHR32285">
    <property type="entry name" value="PROTEIN TRICHOME BIREFRINGENCE-LIKE 9-RELATED"/>
    <property type="match status" value="1"/>
</dbReference>
<dbReference type="PANTHER" id="PTHR32285:SF28">
    <property type="entry name" value="XYLOGLUCAN O-ACETYLTRANSFERASE 2"/>
    <property type="match status" value="1"/>
</dbReference>
<dbReference type="Pfam" id="PF13839">
    <property type="entry name" value="PC-Esterase"/>
    <property type="match status" value="1"/>
</dbReference>
<dbReference type="Pfam" id="PF14416">
    <property type="entry name" value="PMR5N"/>
    <property type="match status" value="1"/>
</dbReference>
<sequence length="420" mass="48615">MTMHEKMKLPSCSCSAFKCGKKDRWLNMERPIPFLLIGLTTILSVFILYTLNPLKFVIEHNIDQKLLLIKPHKEEDKCDLFNGNWVPDFEGSIYTNSSCATIPTSKNCFRNGRKDQDFLNWRWKPERCDLPRFDATAYLDIVRGKTLAFIGDSVARNHIESLLCLLSQKEVPVDAYLDSEDRNRIWHFPVHNFTLKMLWTKFLVHGEERVINGSSSGIFDLYLDKVDENWARDLHSLDYVVISDAHWFFRQVYLHRGSNVVACVYCNEANVTDRGVAFALRMAFRAAFSQINHCNKCKGIVTLLRTFSPSHFENGFWNTGGSCNRTSPYNDQKINFGAYEWEIRSMQVEEIERAEKRGKKGKSFGVLDVTMAMLMRPDGHPGAFWGNQWMKGYNDCVHWCLPGPIDVWNDLLLAVLRRLD</sequence>
<keyword id="KW-1015">Disulfide bond</keyword>
<keyword id="KW-0325">Glycoprotein</keyword>
<keyword id="KW-0333">Golgi apparatus</keyword>
<keyword id="KW-0472">Membrane</keyword>
<keyword id="KW-1185">Reference proteome</keyword>
<keyword id="KW-0735">Signal-anchor</keyword>
<keyword id="KW-0808">Transferase</keyword>
<keyword id="KW-0812">Transmembrane</keyword>
<keyword id="KW-1133">Transmembrane helix</keyword>
<proteinExistence type="evidence at protein level"/>
<name>XGAT4_POPTR</name>
<comment type="function">
    <text evidence="4">Xyloglucan acetyltransferase that catalyzes the acetylation of fucosylated Gal residues on xyloglucan side chains (PubMed:30083810). Predominantly catalyze 6-O-monoacetylation of Gal residues in the Fuc-Gal-Xyl trisaccharide side chains of xyloglucan oligomers (PubMed:30083810).</text>
</comment>
<comment type="biophysicochemical properties">
    <kinetics>
        <KM evidence="4">4.15 mM for xyloglucan oligomer</KM>
        <Vmax evidence="4">106.4 pmol/min/mg enzyme with xyloglucan oligomer as substrate</Vmax>
    </kinetics>
</comment>
<comment type="subcellular location">
    <subcellularLocation>
        <location evidence="6">Golgi apparatus membrane</location>
        <topology evidence="6">Single-pass type II membrane protein</topology>
    </subcellularLocation>
</comment>
<comment type="similarity">
    <text evidence="6">Belongs to the PC-esterase family. TBL subfamily.</text>
</comment>
<accession>A0A2K1X4I9</accession>
<feature type="chain" id="PRO_0000453956" description="Xyloglucan O-acetyltransferase 4">
    <location>
        <begin position="1"/>
        <end position="420"/>
    </location>
</feature>
<feature type="topological domain" description="Cytoplasmic" evidence="6">
    <location>
        <begin position="1"/>
        <end position="30"/>
    </location>
</feature>
<feature type="transmembrane region" description="Helical; Signal-anchor for type II membrane protein" evidence="2">
    <location>
        <begin position="31"/>
        <end position="51"/>
    </location>
</feature>
<feature type="topological domain" description="Lumenal" evidence="6">
    <location>
        <begin position="52"/>
        <end position="420"/>
    </location>
</feature>
<feature type="short sequence motif" description="GDS motif" evidence="7">
    <location>
        <begin position="151"/>
        <end position="153"/>
    </location>
</feature>
<feature type="short sequence motif" description="DXXH motif" evidence="7">
    <location>
        <begin position="395"/>
        <end position="398"/>
    </location>
</feature>
<feature type="active site" description="Nucleophile" evidence="1">
    <location>
        <position position="153"/>
    </location>
</feature>
<feature type="active site" description="Proton donor" evidence="1">
    <location>
        <position position="395"/>
    </location>
</feature>
<feature type="active site" description="Proton acceptor" evidence="1">
    <location>
        <position position="398"/>
    </location>
</feature>
<feature type="glycosylation site" description="N-linked (GlcNAc...) asparagine" evidence="3">
    <location>
        <position position="96"/>
    </location>
</feature>
<feature type="glycosylation site" description="N-linked (GlcNAc...) asparagine" evidence="3">
    <location>
        <position position="192"/>
    </location>
</feature>
<feature type="glycosylation site" description="N-linked (GlcNAc...) asparagine" evidence="3">
    <location>
        <position position="212"/>
    </location>
</feature>
<feature type="glycosylation site" description="N-linked (GlcNAc...) asparagine" evidence="3">
    <location>
        <position position="270"/>
    </location>
</feature>
<feature type="glycosylation site" description="N-linked (GlcNAc...) asparagine" evidence="3">
    <location>
        <position position="324"/>
    </location>
</feature>
<feature type="disulfide bond" evidence="1">
    <location>
        <begin position="78"/>
        <end position="128"/>
    </location>
</feature>
<feature type="disulfide bond" evidence="1">
    <location>
        <begin position="99"/>
        <end position="164"/>
    </location>
</feature>
<feature type="disulfide bond" evidence="1">
    <location>
        <begin position="108"/>
        <end position="400"/>
    </location>
</feature>
<feature type="disulfide bond" evidence="1">
    <location>
        <begin position="323"/>
        <end position="396"/>
    </location>
</feature>
<reference key="1">
    <citation type="journal article" date="2018" name="Planta">
        <title>Xyloglucan O-acetyltransferases from Arabidopsis thaliana and Populus trichocarpa catalyze acetylation of fucosylated galactose residues on xyloglucan side chains.</title>
        <authorList>
            <person name="Zhong R."/>
            <person name="Cui D."/>
            <person name="Ye Z.H."/>
        </authorList>
    </citation>
    <scope>NUCLEOTIDE SEQUENCE [MRNA]</scope>
    <scope>FUNCTION</scope>
    <scope>CATALYTIC ACTIVITY</scope>
    <scope>BIOPHYSICOCHEMICAL PROPERTIES</scope>
</reference>
<reference key="2">
    <citation type="journal article" date="2006" name="Science">
        <title>The genome of black cottonwood, Populus trichocarpa (Torr. &amp; Gray).</title>
        <authorList>
            <person name="Tuskan G.A."/>
            <person name="Difazio S."/>
            <person name="Jansson S."/>
            <person name="Bohlmann J."/>
            <person name="Grigoriev I."/>
            <person name="Hellsten U."/>
            <person name="Putnam N."/>
            <person name="Ralph S."/>
            <person name="Rombauts S."/>
            <person name="Salamov A."/>
            <person name="Schein J."/>
            <person name="Sterck L."/>
            <person name="Aerts A."/>
            <person name="Bhalerao R.R."/>
            <person name="Bhalerao R.P."/>
            <person name="Blaudez D."/>
            <person name="Boerjan W."/>
            <person name="Brun A."/>
            <person name="Brunner A."/>
            <person name="Busov V."/>
            <person name="Campbell M."/>
            <person name="Carlson J."/>
            <person name="Chalot M."/>
            <person name="Chapman J."/>
            <person name="Chen G.-L."/>
            <person name="Cooper D."/>
            <person name="Coutinho P.M."/>
            <person name="Couturier J."/>
            <person name="Covert S."/>
            <person name="Cronk Q."/>
            <person name="Cunningham R."/>
            <person name="Davis J."/>
            <person name="Degroeve S."/>
            <person name="Dejardin A."/>
            <person name="dePamphilis C.W."/>
            <person name="Detter J."/>
            <person name="Dirks B."/>
            <person name="Dubchak I."/>
            <person name="Duplessis S."/>
            <person name="Ehlting J."/>
            <person name="Ellis B."/>
            <person name="Gendler K."/>
            <person name="Goodstein D."/>
            <person name="Gribskov M."/>
            <person name="Grimwood J."/>
            <person name="Groover A."/>
            <person name="Gunter L."/>
            <person name="Hamberger B."/>
            <person name="Heinze B."/>
            <person name="Helariutta Y."/>
            <person name="Henrissat B."/>
            <person name="Holligan D."/>
            <person name="Holt R."/>
            <person name="Huang W."/>
            <person name="Islam-Faridi N."/>
            <person name="Jones S."/>
            <person name="Jones-Rhoades M."/>
            <person name="Jorgensen R."/>
            <person name="Joshi C."/>
            <person name="Kangasjaervi J."/>
            <person name="Karlsson J."/>
            <person name="Kelleher C."/>
            <person name="Kirkpatrick R."/>
            <person name="Kirst M."/>
            <person name="Kohler A."/>
            <person name="Kalluri U."/>
            <person name="Larimer F."/>
            <person name="Leebens-Mack J."/>
            <person name="Leple J.-C."/>
            <person name="Locascio P."/>
            <person name="Lou Y."/>
            <person name="Lucas S."/>
            <person name="Martin F."/>
            <person name="Montanini B."/>
            <person name="Napoli C."/>
            <person name="Nelson D.R."/>
            <person name="Nelson C."/>
            <person name="Nieminen K."/>
            <person name="Nilsson O."/>
            <person name="Pereda V."/>
            <person name="Peter G."/>
            <person name="Philippe R."/>
            <person name="Pilate G."/>
            <person name="Poliakov A."/>
            <person name="Razumovskaya J."/>
            <person name="Richardson P."/>
            <person name="Rinaldi C."/>
            <person name="Ritland K."/>
            <person name="Rouze P."/>
            <person name="Ryaboy D."/>
            <person name="Schmutz J."/>
            <person name="Schrader J."/>
            <person name="Segerman B."/>
            <person name="Shin H."/>
            <person name="Siddiqui A."/>
            <person name="Sterky F."/>
            <person name="Terry A."/>
            <person name="Tsai C.-J."/>
            <person name="Uberbacher E."/>
            <person name="Unneberg P."/>
            <person name="Vahala J."/>
            <person name="Wall K."/>
            <person name="Wessler S."/>
            <person name="Yang G."/>
            <person name="Yin T."/>
            <person name="Douglas C."/>
            <person name="Marra M."/>
            <person name="Sandberg G."/>
            <person name="Van de Peer Y."/>
            <person name="Rokhsar D.S."/>
        </authorList>
    </citation>
    <scope>NUCLEOTIDE SEQUENCE [LARGE SCALE GENOMIC DNA]</scope>
    <source>
        <strain>cv. Nisqually</strain>
    </source>
</reference>
<organism>
    <name type="scientific">Populus trichocarpa</name>
    <name type="common">Western balsam poplar</name>
    <name type="synonym">Populus balsamifera subsp. trichocarpa</name>
    <dbReference type="NCBI Taxonomy" id="3694"/>
    <lineage>
        <taxon>Eukaryota</taxon>
        <taxon>Viridiplantae</taxon>
        <taxon>Streptophyta</taxon>
        <taxon>Embryophyta</taxon>
        <taxon>Tracheophyta</taxon>
        <taxon>Spermatophyta</taxon>
        <taxon>Magnoliopsida</taxon>
        <taxon>eudicotyledons</taxon>
        <taxon>Gunneridae</taxon>
        <taxon>Pentapetalae</taxon>
        <taxon>rosids</taxon>
        <taxon>fabids</taxon>
        <taxon>Malpighiales</taxon>
        <taxon>Salicaceae</taxon>
        <taxon>Saliceae</taxon>
        <taxon>Populus</taxon>
    </lineage>
</organism>
<gene>
    <name evidence="5" type="primary">XGOAT4</name>
    <name evidence="8" type="ORF">POPTR_017G073700</name>
</gene>
<evidence type="ECO:0000250" key="1">
    <source>
        <dbReference type="UniProtKB" id="Q9LY46"/>
    </source>
</evidence>
<evidence type="ECO:0000255" key="2"/>
<evidence type="ECO:0000255" key="3">
    <source>
        <dbReference type="PROSITE-ProRule" id="PRU00498"/>
    </source>
</evidence>
<evidence type="ECO:0000269" key="4">
    <source>
    </source>
</evidence>
<evidence type="ECO:0000303" key="5">
    <source>
    </source>
</evidence>
<evidence type="ECO:0000305" key="6"/>
<evidence type="ECO:0000305" key="7">
    <source>
    </source>
</evidence>
<evidence type="ECO:0000312" key="8">
    <source>
        <dbReference type="EMBL" id="PNS95700.1"/>
    </source>
</evidence>